<sequence length="161" mass="17456">MADGLDFTGMLRSAGLRITRPRLAVLNAVKEHPHAETDHVIRAVRVQLPDVSHQTVYDXLNALTAAGLVRRIQPTGSVARYETRVNDNHHHVVCRSCGAIADVDCAVGDAPCLTAADDNGFDIDEAEVIYWASALTARDLRVLDDSPVAHQMKGKAMPPNT</sequence>
<proteinExistence type="inferred from homology"/>
<evidence type="ECO:0000250" key="1"/>
<evidence type="ECO:0000305" key="2"/>
<feature type="chain" id="PRO_0000095560" description="Ferric uptake regulation protein 1">
    <location>
        <begin position="1"/>
        <end position="161" status="greater than"/>
    </location>
</feature>
<feature type="binding site" evidence="1">
    <location>
        <position position="94"/>
    </location>
    <ligand>
        <name>Zn(2+)</name>
        <dbReference type="ChEBI" id="CHEBI:29105"/>
    </ligand>
</feature>
<feature type="binding site" evidence="1">
    <location>
        <position position="97"/>
    </location>
    <ligand>
        <name>Zn(2+)</name>
        <dbReference type="ChEBI" id="CHEBI:29105"/>
    </ligand>
</feature>
<feature type="non-terminal residue">
    <location>
        <position position="161"/>
    </location>
</feature>
<name>FUR1_MYCFO</name>
<dbReference type="EMBL" id="Y17061">
    <property type="protein sequence ID" value="CAA76608.1"/>
    <property type="molecule type" value="Genomic_DNA"/>
</dbReference>
<dbReference type="STRING" id="1766.XA26_32260"/>
<dbReference type="GO" id="GO:0005737">
    <property type="term" value="C:cytoplasm"/>
    <property type="evidence" value="ECO:0007669"/>
    <property type="project" value="UniProtKB-SubCell"/>
</dbReference>
<dbReference type="GO" id="GO:0003700">
    <property type="term" value="F:DNA-binding transcription factor activity"/>
    <property type="evidence" value="ECO:0007669"/>
    <property type="project" value="InterPro"/>
</dbReference>
<dbReference type="GO" id="GO:0000976">
    <property type="term" value="F:transcription cis-regulatory region binding"/>
    <property type="evidence" value="ECO:0007669"/>
    <property type="project" value="TreeGrafter"/>
</dbReference>
<dbReference type="GO" id="GO:0008270">
    <property type="term" value="F:zinc ion binding"/>
    <property type="evidence" value="ECO:0007669"/>
    <property type="project" value="TreeGrafter"/>
</dbReference>
<dbReference type="GO" id="GO:0045892">
    <property type="term" value="P:negative regulation of DNA-templated transcription"/>
    <property type="evidence" value="ECO:0007669"/>
    <property type="project" value="TreeGrafter"/>
</dbReference>
<dbReference type="GO" id="GO:1900376">
    <property type="term" value="P:regulation of secondary metabolite biosynthetic process"/>
    <property type="evidence" value="ECO:0007669"/>
    <property type="project" value="TreeGrafter"/>
</dbReference>
<dbReference type="CDD" id="cd07153">
    <property type="entry name" value="Fur_like"/>
    <property type="match status" value="1"/>
</dbReference>
<dbReference type="Gene3D" id="3.30.1490.190">
    <property type="match status" value="1"/>
</dbReference>
<dbReference type="Gene3D" id="1.10.10.10">
    <property type="entry name" value="Winged helix-like DNA-binding domain superfamily/Winged helix DNA-binding domain"/>
    <property type="match status" value="1"/>
</dbReference>
<dbReference type="InterPro" id="IPR002481">
    <property type="entry name" value="FUR"/>
</dbReference>
<dbReference type="InterPro" id="IPR043135">
    <property type="entry name" value="Fur_C"/>
</dbReference>
<dbReference type="InterPro" id="IPR036388">
    <property type="entry name" value="WH-like_DNA-bd_sf"/>
</dbReference>
<dbReference type="InterPro" id="IPR036390">
    <property type="entry name" value="WH_DNA-bd_sf"/>
</dbReference>
<dbReference type="PANTHER" id="PTHR33202:SF18">
    <property type="entry name" value="TRANSCRIPTIONAL REGULATOR FURA"/>
    <property type="match status" value="1"/>
</dbReference>
<dbReference type="PANTHER" id="PTHR33202">
    <property type="entry name" value="ZINC UPTAKE REGULATION PROTEIN"/>
    <property type="match status" value="1"/>
</dbReference>
<dbReference type="Pfam" id="PF01475">
    <property type="entry name" value="FUR"/>
    <property type="match status" value="1"/>
</dbReference>
<dbReference type="SUPFAM" id="SSF46785">
    <property type="entry name" value="Winged helix' DNA-binding domain"/>
    <property type="match status" value="1"/>
</dbReference>
<keyword id="KW-0963">Cytoplasm</keyword>
<keyword id="KW-0238">DNA-binding</keyword>
<keyword id="KW-0408">Iron</keyword>
<keyword id="KW-0479">Metal-binding</keyword>
<keyword id="KW-0678">Repressor</keyword>
<keyword id="KW-0804">Transcription</keyword>
<keyword id="KW-0805">Transcription regulation</keyword>
<keyword id="KW-0862">Zinc</keyword>
<gene>
    <name type="primary">fur1</name>
    <name type="synonym">furA I</name>
</gene>
<organism>
    <name type="scientific">Mycolicibacterium fortuitum</name>
    <name type="common">Mycobacterium fortuitum</name>
    <dbReference type="NCBI Taxonomy" id="1766"/>
    <lineage>
        <taxon>Bacteria</taxon>
        <taxon>Bacillati</taxon>
        <taxon>Actinomycetota</taxon>
        <taxon>Actinomycetes</taxon>
        <taxon>Mycobacteriales</taxon>
        <taxon>Mycobacteriaceae</taxon>
        <taxon>Mycolicibacterium</taxon>
    </lineage>
</organism>
<reference key="1">
    <citation type="submission" date="1998-04" db="EMBL/GenBank/DDBJ databases">
        <authorList>
            <person name="Menendez M.C."/>
        </authorList>
    </citation>
    <scope>NUCLEOTIDE SEQUENCE [GENOMIC DNA]</scope>
    <source>
        <strain>ATCC 6841 / DSM 46621 / CIP 104534 / JCM 6387 / KCTC 9510 / NBRC 13159 / NCTC 10394</strain>
    </source>
</reference>
<protein>
    <recommendedName>
        <fullName>Ferric uptake regulation protein 1</fullName>
        <shortName>Ferric uptake regulator 1</shortName>
    </recommendedName>
</protein>
<accession>O69450</accession>
<comment type="function">
    <text evidence="1">Acts as a global negative controlling element, employing Fe(2+) as a cofactor to bind the operator of the repressed genes.</text>
</comment>
<comment type="subcellular location">
    <subcellularLocation>
        <location evidence="1">Cytoplasm</location>
    </subcellularLocation>
</comment>
<comment type="similarity">
    <text evidence="2">Belongs to the Fur family.</text>
</comment>